<organismHost>
    <name type="scientific">Lepidoptera</name>
    <name type="common">butterflies and moths</name>
    <dbReference type="NCBI Taxonomy" id="7088"/>
</organismHost>
<sequence>MFEAEFKTGAVLKRLVETFKDLLPHATFDCDNRGVSMQVMDTSHVALVSLQLHAEGFKKYRCDRNVPLNVSINSLSKIVKCVNERSSVLMKAEDQGDVMAFVFNNDNRICTYTLKLMCIDVEHLGIPDSDYDCVVHMSSVEFAQVCKDMTQFDHDIIVSCSKKGLQFRANGDIGSADVQMSADNENFSVLKAKQTVTHTFAGDYLCHFAKAAPLAPTVTIYMSEELPFKLEYCIKDVGVLACFLAPKIVNNDEEIF</sequence>
<organism>
    <name type="scientific">Autographa californica nuclear polyhedrosis virus</name>
    <name type="common">AcMNPV</name>
    <dbReference type="NCBI Taxonomy" id="46015"/>
    <lineage>
        <taxon>Viruses</taxon>
        <taxon>Viruses incertae sedis</taxon>
        <taxon>Naldaviricetes</taxon>
        <taxon>Lefavirales</taxon>
        <taxon>Baculoviridae</taxon>
        <taxon>Alphabaculovirus</taxon>
        <taxon>Alphabaculovirus aucalifornicae</taxon>
    </lineage>
</organism>
<feature type="chain" id="PRO_0000149223" description="Probable DNA polymerase sliding clamp">
    <location>
        <begin position="1"/>
        <end position="256"/>
    </location>
</feature>
<feature type="DNA-binding region" evidence="1">
    <location>
        <begin position="61"/>
        <end position="80"/>
    </location>
</feature>
<evidence type="ECO:0000255" key="1"/>
<evidence type="ECO:0000269" key="2">
    <source>
    </source>
</evidence>
<evidence type="ECO:0000269" key="3">
    <source>
    </source>
</evidence>
<evidence type="ECO:0000269" key="4">
    <source>
    </source>
</evidence>
<evidence type="ECO:0000305" key="5"/>
<comment type="function">
    <text evidence="2 3 4">Stimulates the viral DNA replication. The virus utilizes both cellular and viral PCNAs during viral DNA replication in order to produce budded virus (BV). In addition, stimulates the expression of late genes 38K and VP39 by promoting the transcription of IE2.</text>
</comment>
<comment type="developmental stage">
    <text>Transcribed early (from 2 through 6 hours post-infection) but not late (12 to 24 hours post-infection) in infection.</text>
</comment>
<comment type="similarity">
    <text evidence="5">Belongs to the PCNA family.</text>
</comment>
<name>PCNA_NPVAC</name>
<dbReference type="EMBL" id="M20718">
    <property type="protein sequence ID" value="AAA21097.1"/>
    <property type="molecule type" value="Genomic_DNA"/>
</dbReference>
<dbReference type="EMBL" id="L22858">
    <property type="protein sequence ID" value="AAA66679.2"/>
    <property type="molecule type" value="Genomic_DNA"/>
</dbReference>
<dbReference type="EMBL" id="U04879">
    <property type="protein sequence ID" value="AAA20059.1"/>
    <property type="molecule type" value="Genomic_DNA"/>
</dbReference>
<dbReference type="PIR" id="A28147">
    <property type="entry name" value="WMNVET"/>
</dbReference>
<dbReference type="SMR" id="P11038"/>
<dbReference type="KEGG" id="vg:1403881"/>
<dbReference type="OrthoDB" id="8431at10239"/>
<dbReference type="Proteomes" id="UP000008292">
    <property type="component" value="Segment"/>
</dbReference>
<dbReference type="GO" id="GO:0003677">
    <property type="term" value="F:DNA binding"/>
    <property type="evidence" value="ECO:0007669"/>
    <property type="project" value="UniProtKB-KW"/>
</dbReference>
<dbReference type="GO" id="GO:0030337">
    <property type="term" value="F:DNA polymerase processivity factor activity"/>
    <property type="evidence" value="ECO:0007669"/>
    <property type="project" value="InterPro"/>
</dbReference>
<dbReference type="GO" id="GO:0006272">
    <property type="term" value="P:leading strand elongation"/>
    <property type="evidence" value="ECO:0007669"/>
    <property type="project" value="TreeGrafter"/>
</dbReference>
<dbReference type="GO" id="GO:0006298">
    <property type="term" value="P:mismatch repair"/>
    <property type="evidence" value="ECO:0007669"/>
    <property type="project" value="TreeGrafter"/>
</dbReference>
<dbReference type="GO" id="GO:0006275">
    <property type="term" value="P:regulation of DNA replication"/>
    <property type="evidence" value="ECO:0007669"/>
    <property type="project" value="InterPro"/>
</dbReference>
<dbReference type="GO" id="GO:0019985">
    <property type="term" value="P:translesion synthesis"/>
    <property type="evidence" value="ECO:0007669"/>
    <property type="project" value="TreeGrafter"/>
</dbReference>
<dbReference type="CDD" id="cd00577">
    <property type="entry name" value="PCNA"/>
    <property type="match status" value="1"/>
</dbReference>
<dbReference type="Gene3D" id="3.70.10.10">
    <property type="match status" value="1"/>
</dbReference>
<dbReference type="HAMAP" id="MF_00317">
    <property type="entry name" value="DNApol_clamp_arch"/>
    <property type="match status" value="1"/>
</dbReference>
<dbReference type="InterPro" id="IPR046938">
    <property type="entry name" value="DNA_clamp_sf"/>
</dbReference>
<dbReference type="InterPro" id="IPR000730">
    <property type="entry name" value="Pr_cel_nuc_antig"/>
</dbReference>
<dbReference type="InterPro" id="IPR022649">
    <property type="entry name" value="Pr_cel_nuc_antig_C"/>
</dbReference>
<dbReference type="InterPro" id="IPR022659">
    <property type="entry name" value="Pr_cel_nuc_antig_CS"/>
</dbReference>
<dbReference type="InterPro" id="IPR022648">
    <property type="entry name" value="Pr_cel_nuc_antig_N"/>
</dbReference>
<dbReference type="NCBIfam" id="TIGR00590">
    <property type="entry name" value="pcna"/>
    <property type="match status" value="1"/>
</dbReference>
<dbReference type="PANTHER" id="PTHR11352">
    <property type="entry name" value="PROLIFERATING CELL NUCLEAR ANTIGEN"/>
    <property type="match status" value="1"/>
</dbReference>
<dbReference type="PANTHER" id="PTHR11352:SF0">
    <property type="entry name" value="PROLIFERATING CELL NUCLEAR ANTIGEN"/>
    <property type="match status" value="1"/>
</dbReference>
<dbReference type="Pfam" id="PF02747">
    <property type="entry name" value="PCNA_C"/>
    <property type="match status" value="1"/>
</dbReference>
<dbReference type="Pfam" id="PF00705">
    <property type="entry name" value="PCNA_N"/>
    <property type="match status" value="1"/>
</dbReference>
<dbReference type="PRINTS" id="PR00339">
    <property type="entry name" value="PCNACYCLIN"/>
</dbReference>
<dbReference type="SUPFAM" id="SSF55979">
    <property type="entry name" value="DNA clamp"/>
    <property type="match status" value="2"/>
</dbReference>
<dbReference type="PROSITE" id="PS01251">
    <property type="entry name" value="PCNA_1"/>
    <property type="match status" value="1"/>
</dbReference>
<dbReference type="PROSITE" id="PS00293">
    <property type="entry name" value="PCNA_2"/>
    <property type="match status" value="1"/>
</dbReference>
<reference key="1">
    <citation type="journal article" date="1988" name="J. Virol.">
        <title>Characterization of an early gene accelerating expression of late genes of the baculovirus Autographa californica nuclear polyhedrosis virus.</title>
        <authorList>
            <person name="Crawford A."/>
            <person name="Miller L.K."/>
        </authorList>
    </citation>
    <scope>NUCLEOTIDE SEQUENCE [GENOMIC DNA]</scope>
    <source>
        <strain>L1</strain>
    </source>
</reference>
<reference key="2">
    <citation type="journal article" date="1994" name="Virology">
        <title>The complete DNA sequence of Autographa californica nuclear polyhedrosis virus.</title>
        <authorList>
            <person name="Ayres M.D."/>
            <person name="Howard S.C."/>
            <person name="Kuzio J."/>
            <person name="Lopez-Ferber M."/>
            <person name="Possee R.D."/>
        </authorList>
    </citation>
    <scope>NUCLEOTIDE SEQUENCE [LARGE SCALE GENOMIC DNA]</scope>
    <source>
        <strain>C6</strain>
    </source>
</reference>
<reference key="3">
    <citation type="journal article" date="1994" name="J. Virol.">
        <title>A baculovirus gene involved in late gene expression predicts a large polypeptide with a conserved motif of RNA polymerases.</title>
        <authorList>
            <person name="Passarelli A.L."/>
            <person name="Todd J.W."/>
            <person name="Miller L.K."/>
        </authorList>
    </citation>
    <scope>NUCLEOTIDE SEQUENCE [GENOMIC DNA] OF 1-126</scope>
    <source>
        <strain>L1</strain>
    </source>
</reference>
<reference key="4">
    <citation type="journal article" date="1989" name="Nature">
        <title>Viral proliferating cell nuclear antigen.</title>
        <authorList>
            <person name="O'Reilly D.R."/>
            <person name="Crawford A.M."/>
            <person name="Miller L.K."/>
        </authorList>
    </citation>
    <scope>SIMILARITY TO PCNA</scope>
    <scope>FUNCTION</scope>
</reference>
<reference key="5">
    <citation type="journal article" date="2004" name="J. Gen. Virol.">
        <title>Association of Sf9 cell proliferating cell nuclear antigen with the DNA replication site of Autographa californica multicapsid nucleopolyhedrovirus.</title>
        <authorList>
            <person name="Iwahori S."/>
            <person name="Ikeda M."/>
            <person name="Kobayashi M."/>
        </authorList>
    </citation>
    <scope>FUNCTION</scope>
</reference>
<reference key="6">
    <citation type="journal article" date="2018" name="Mol. Cell. Biochem.">
        <title>Function analysis of Ac-PCNA and Sf-PCNA during the Autographa californica multiple nucleopolyhedrovirus infection process.</title>
        <authorList>
            <person name="Fu Y."/>
            <person name="Wang R."/>
            <person name="Liang A."/>
        </authorList>
    </citation>
    <scope>FUNCTION</scope>
</reference>
<keyword id="KW-0235">DNA replication</keyword>
<keyword id="KW-0238">DNA-binding</keyword>
<keyword id="KW-0244">Early protein</keyword>
<keyword id="KW-1185">Reference proteome</keyword>
<proteinExistence type="evidence at transcript level"/>
<accession>P11038</accession>
<gene>
    <name type="primary">PCNA</name>
    <name type="ORF">ORF49</name>
</gene>
<protein>
    <recommendedName>
        <fullName>Probable DNA polymerase sliding clamp</fullName>
    </recommendedName>
    <alternativeName>
        <fullName>EcoRI-T site protein ETL</fullName>
    </alternativeName>
    <alternativeName>
        <fullName>Proliferating cell nuclear antigen homolog</fullName>
        <shortName>PCNA</shortName>
    </alternativeName>
</protein>